<gene>
    <name type="primary">mhpE</name>
    <name type="ordered locus">BTH_II0570</name>
</gene>
<protein>
    <recommendedName>
        <fullName evidence="1">4-hydroxy-2-oxovalerate aldolase</fullName>
        <shortName evidence="1">HOA</shortName>
        <ecNumber evidence="1">4.1.3.39</ecNumber>
    </recommendedName>
    <alternativeName>
        <fullName evidence="1">4-hydroxy-2-keto-pentanoic acid aldolase</fullName>
    </alternativeName>
    <alternativeName>
        <fullName evidence="1">4-hydroxy-2-oxopentanoate aldolase</fullName>
    </alternativeName>
</protein>
<feature type="chain" id="PRO_0000387807" description="4-hydroxy-2-oxovalerate aldolase">
    <location>
        <begin position="1"/>
        <end position="347"/>
    </location>
</feature>
<feature type="domain" description="Pyruvate carboxyltransferase" evidence="1">
    <location>
        <begin position="2"/>
        <end position="252"/>
    </location>
</feature>
<feature type="active site" description="Proton acceptor" evidence="1">
    <location>
        <position position="14"/>
    </location>
</feature>
<feature type="binding site" evidence="1">
    <location>
        <begin position="10"/>
        <end position="11"/>
    </location>
    <ligand>
        <name>substrate</name>
    </ligand>
</feature>
<feature type="binding site" evidence="1">
    <location>
        <position position="11"/>
    </location>
    <ligand>
        <name>Mn(2+)</name>
        <dbReference type="ChEBI" id="CHEBI:29035"/>
    </ligand>
</feature>
<feature type="binding site" evidence="1">
    <location>
        <position position="164"/>
    </location>
    <ligand>
        <name>substrate</name>
    </ligand>
</feature>
<feature type="binding site" evidence="1">
    <location>
        <position position="191"/>
    </location>
    <ligand>
        <name>Mn(2+)</name>
        <dbReference type="ChEBI" id="CHEBI:29035"/>
    </ligand>
</feature>
<feature type="binding site" evidence="1">
    <location>
        <position position="191"/>
    </location>
    <ligand>
        <name>substrate</name>
    </ligand>
</feature>
<feature type="binding site" evidence="1">
    <location>
        <position position="193"/>
    </location>
    <ligand>
        <name>Mn(2+)</name>
        <dbReference type="ChEBI" id="CHEBI:29035"/>
    </ligand>
</feature>
<feature type="site" description="Transition state stabilizer" evidence="1">
    <location>
        <position position="10"/>
    </location>
</feature>
<reference key="1">
    <citation type="journal article" date="2005" name="BMC Genomics">
        <title>Bacterial genome adaptation to niches: divergence of the potential virulence genes in three Burkholderia species of different survival strategies.</title>
        <authorList>
            <person name="Kim H.S."/>
            <person name="Schell M.A."/>
            <person name="Yu Y."/>
            <person name="Ulrich R.L."/>
            <person name="Sarria S.H."/>
            <person name="Nierman W.C."/>
            <person name="DeShazer D."/>
        </authorList>
    </citation>
    <scope>NUCLEOTIDE SEQUENCE [LARGE SCALE GENOMIC DNA]</scope>
    <source>
        <strain>ATCC 700388 / DSM 13276 / CCUG 48851 / CIP 106301 / E264</strain>
    </source>
</reference>
<evidence type="ECO:0000255" key="1">
    <source>
        <dbReference type="HAMAP-Rule" id="MF_01656"/>
    </source>
</evidence>
<sequence>MILISDATLRDGNHAIRHQLSAAQIHAYARAADEAGIDIVEVGHGNGLGGSSCLLGQTPIGDRLMLETARAALRTSRLGVHFIPGLGKAADIALALEIGVDVVRVATHCTEANVSARFIEQTRVAGRTAFGVLMMSHMAPSDVLLAQAKLMERYGAQAVVLMDSAGYSTPSLVRAKVERLVDGLDIDVGFHAHNNLGLAVANSLVALEAGARIVDACVKGFGAGAGNTQLETLVAAMEREGHDTRTTFEHVMALARGTEAFLNPKTPHIQPANIASGLYGLFSGYVPHIQKAAQEFGVNEFELYKRLAERKLVAGQEDIIIEEASRLARERDVQRATDGVRISELSA</sequence>
<keyword id="KW-0058">Aromatic hydrocarbons catabolism</keyword>
<keyword id="KW-0456">Lyase</keyword>
<keyword id="KW-0464">Manganese</keyword>
<keyword id="KW-0479">Metal-binding</keyword>
<name>HOA_BURTA</name>
<accession>Q2T7S9</accession>
<organism>
    <name type="scientific">Burkholderia thailandensis (strain ATCC 700388 / DSM 13276 / CCUG 48851 / CIP 106301 / E264)</name>
    <dbReference type="NCBI Taxonomy" id="271848"/>
    <lineage>
        <taxon>Bacteria</taxon>
        <taxon>Pseudomonadati</taxon>
        <taxon>Pseudomonadota</taxon>
        <taxon>Betaproteobacteria</taxon>
        <taxon>Burkholderiales</taxon>
        <taxon>Burkholderiaceae</taxon>
        <taxon>Burkholderia</taxon>
        <taxon>pseudomallei group</taxon>
    </lineage>
</organism>
<comment type="catalytic activity">
    <reaction evidence="1">
        <text>(S)-4-hydroxy-2-oxopentanoate = acetaldehyde + pyruvate</text>
        <dbReference type="Rhea" id="RHEA:22624"/>
        <dbReference type="ChEBI" id="CHEBI:15343"/>
        <dbReference type="ChEBI" id="CHEBI:15361"/>
        <dbReference type="ChEBI" id="CHEBI:73143"/>
        <dbReference type="EC" id="4.1.3.39"/>
    </reaction>
</comment>
<comment type="similarity">
    <text evidence="1">Belongs to the 4-hydroxy-2-oxovalerate aldolase family.</text>
</comment>
<dbReference type="EC" id="4.1.3.39" evidence="1"/>
<dbReference type="EMBL" id="CP000085">
    <property type="protein sequence ID" value="ABC35581.1"/>
    <property type="molecule type" value="Genomic_DNA"/>
</dbReference>
<dbReference type="SMR" id="Q2T7S9"/>
<dbReference type="GeneID" id="45118064"/>
<dbReference type="KEGG" id="bte:BTH_II0570"/>
<dbReference type="HOGENOM" id="CLU_049173_0_0_4"/>
<dbReference type="Proteomes" id="UP000001930">
    <property type="component" value="Chromosome II"/>
</dbReference>
<dbReference type="GO" id="GO:0003852">
    <property type="term" value="F:2-isopropylmalate synthase activity"/>
    <property type="evidence" value="ECO:0007669"/>
    <property type="project" value="TreeGrafter"/>
</dbReference>
<dbReference type="GO" id="GO:0008701">
    <property type="term" value="F:4-hydroxy-2-oxovalerate aldolase activity"/>
    <property type="evidence" value="ECO:0007669"/>
    <property type="project" value="UniProtKB-UniRule"/>
</dbReference>
<dbReference type="GO" id="GO:0030145">
    <property type="term" value="F:manganese ion binding"/>
    <property type="evidence" value="ECO:0007669"/>
    <property type="project" value="UniProtKB-UniRule"/>
</dbReference>
<dbReference type="GO" id="GO:0009056">
    <property type="term" value="P:catabolic process"/>
    <property type="evidence" value="ECO:0007669"/>
    <property type="project" value="UniProtKB-KW"/>
</dbReference>
<dbReference type="GO" id="GO:0009098">
    <property type="term" value="P:L-leucine biosynthetic process"/>
    <property type="evidence" value="ECO:0007669"/>
    <property type="project" value="TreeGrafter"/>
</dbReference>
<dbReference type="CDD" id="cd07943">
    <property type="entry name" value="DRE_TIM_HOA"/>
    <property type="match status" value="1"/>
</dbReference>
<dbReference type="Gene3D" id="1.10.8.60">
    <property type="match status" value="1"/>
</dbReference>
<dbReference type="Gene3D" id="3.20.20.70">
    <property type="entry name" value="Aldolase class I"/>
    <property type="match status" value="1"/>
</dbReference>
<dbReference type="HAMAP" id="MF_01656">
    <property type="entry name" value="HOA"/>
    <property type="match status" value="1"/>
</dbReference>
<dbReference type="InterPro" id="IPR050073">
    <property type="entry name" value="2-IPM_HCS-like"/>
</dbReference>
<dbReference type="InterPro" id="IPR017629">
    <property type="entry name" value="4OH_2_O-val_aldolase"/>
</dbReference>
<dbReference type="InterPro" id="IPR013785">
    <property type="entry name" value="Aldolase_TIM"/>
</dbReference>
<dbReference type="InterPro" id="IPR012425">
    <property type="entry name" value="DmpG_comm"/>
</dbReference>
<dbReference type="InterPro" id="IPR035685">
    <property type="entry name" value="DRE_TIM_HOA"/>
</dbReference>
<dbReference type="InterPro" id="IPR000891">
    <property type="entry name" value="PYR_CT"/>
</dbReference>
<dbReference type="NCBIfam" id="TIGR03217">
    <property type="entry name" value="4OH_2_O_val_ald"/>
    <property type="match status" value="1"/>
</dbReference>
<dbReference type="NCBIfam" id="NF006049">
    <property type="entry name" value="PRK08195.1"/>
    <property type="match status" value="1"/>
</dbReference>
<dbReference type="PANTHER" id="PTHR10277:SF9">
    <property type="entry name" value="2-ISOPROPYLMALATE SYNTHASE 1, CHLOROPLASTIC-RELATED"/>
    <property type="match status" value="1"/>
</dbReference>
<dbReference type="PANTHER" id="PTHR10277">
    <property type="entry name" value="HOMOCITRATE SYNTHASE-RELATED"/>
    <property type="match status" value="1"/>
</dbReference>
<dbReference type="Pfam" id="PF07836">
    <property type="entry name" value="DmpG_comm"/>
    <property type="match status" value="1"/>
</dbReference>
<dbReference type="Pfam" id="PF00682">
    <property type="entry name" value="HMGL-like"/>
    <property type="match status" value="1"/>
</dbReference>
<dbReference type="SUPFAM" id="SSF51569">
    <property type="entry name" value="Aldolase"/>
    <property type="match status" value="1"/>
</dbReference>
<dbReference type="SUPFAM" id="SSF89000">
    <property type="entry name" value="post-HMGL domain-like"/>
    <property type="match status" value="1"/>
</dbReference>
<dbReference type="PROSITE" id="PS50991">
    <property type="entry name" value="PYR_CT"/>
    <property type="match status" value="1"/>
</dbReference>
<proteinExistence type="inferred from homology"/>